<protein>
    <recommendedName>
        <fullName evidence="1">Methylthioribose kinase</fullName>
        <shortName evidence="1">MTR kinase</shortName>
        <ecNumber evidence="1">2.7.1.100</ecNumber>
    </recommendedName>
</protein>
<dbReference type="EC" id="2.7.1.100" evidence="1"/>
<dbReference type="EMBL" id="CP000668">
    <property type="protein sequence ID" value="ABP41240.1"/>
    <property type="molecule type" value="Genomic_DNA"/>
</dbReference>
<dbReference type="RefSeq" id="WP_011906390.1">
    <property type="nucleotide sequence ID" value="NZ_CP009715.1"/>
</dbReference>
<dbReference type="SMR" id="A4TPM8"/>
<dbReference type="KEGG" id="ypp:YPDSF_2878"/>
<dbReference type="PATRIC" id="fig|386656.14.peg.142"/>
<dbReference type="UniPathway" id="UPA00904">
    <property type="reaction ID" value="UER00872"/>
</dbReference>
<dbReference type="GO" id="GO:0005524">
    <property type="term" value="F:ATP binding"/>
    <property type="evidence" value="ECO:0007669"/>
    <property type="project" value="UniProtKB-UniRule"/>
</dbReference>
<dbReference type="GO" id="GO:0046522">
    <property type="term" value="F:S-methyl-5-thioribose kinase activity"/>
    <property type="evidence" value="ECO:0007669"/>
    <property type="project" value="UniProtKB-UniRule"/>
</dbReference>
<dbReference type="GO" id="GO:0019509">
    <property type="term" value="P:L-methionine salvage from methylthioadenosine"/>
    <property type="evidence" value="ECO:0007669"/>
    <property type="project" value="UniProtKB-UniRule"/>
</dbReference>
<dbReference type="Gene3D" id="3.90.1200.10">
    <property type="match status" value="1"/>
</dbReference>
<dbReference type="Gene3D" id="3.30.200.20">
    <property type="entry name" value="Phosphorylase Kinase, domain 1"/>
    <property type="match status" value="1"/>
</dbReference>
<dbReference type="HAMAP" id="MF_01683">
    <property type="entry name" value="Salvage_MtnK"/>
    <property type="match status" value="1"/>
</dbReference>
<dbReference type="InterPro" id="IPR002575">
    <property type="entry name" value="Aminoglycoside_PTrfase"/>
</dbReference>
<dbReference type="InterPro" id="IPR011009">
    <property type="entry name" value="Kinase-like_dom_sf"/>
</dbReference>
<dbReference type="InterPro" id="IPR009212">
    <property type="entry name" value="Methylthioribose_kinase"/>
</dbReference>
<dbReference type="NCBIfam" id="TIGR01767">
    <property type="entry name" value="MTRK"/>
    <property type="match status" value="1"/>
</dbReference>
<dbReference type="PANTHER" id="PTHR34273">
    <property type="entry name" value="METHYLTHIORIBOSE KINASE"/>
    <property type="match status" value="1"/>
</dbReference>
<dbReference type="PANTHER" id="PTHR34273:SF2">
    <property type="entry name" value="METHYLTHIORIBOSE KINASE"/>
    <property type="match status" value="1"/>
</dbReference>
<dbReference type="Pfam" id="PF01636">
    <property type="entry name" value="APH"/>
    <property type="match status" value="1"/>
</dbReference>
<dbReference type="PIRSF" id="PIRSF031134">
    <property type="entry name" value="MTRK"/>
    <property type="match status" value="1"/>
</dbReference>
<dbReference type="SUPFAM" id="SSF56112">
    <property type="entry name" value="Protein kinase-like (PK-like)"/>
    <property type="match status" value="1"/>
</dbReference>
<reference key="1">
    <citation type="submission" date="2007-02" db="EMBL/GenBank/DDBJ databases">
        <title>Complete sequence of chromosome of Yersinia pestis Pestoides F.</title>
        <authorList>
            <consortium name="US DOE Joint Genome Institute"/>
            <person name="Copeland A."/>
            <person name="Lucas S."/>
            <person name="Lapidus A."/>
            <person name="Barry K."/>
            <person name="Detter J.C."/>
            <person name="Glavina del Rio T."/>
            <person name="Hammon N."/>
            <person name="Israni S."/>
            <person name="Dalin E."/>
            <person name="Tice H."/>
            <person name="Pitluck S."/>
            <person name="Di Bartolo G."/>
            <person name="Chain P."/>
            <person name="Malfatti S."/>
            <person name="Shin M."/>
            <person name="Vergez L."/>
            <person name="Schmutz J."/>
            <person name="Larimer F."/>
            <person name="Land M."/>
            <person name="Hauser L."/>
            <person name="Worsham P."/>
            <person name="Chu M."/>
            <person name="Bearden S."/>
            <person name="Garcia E."/>
            <person name="Richardson P."/>
        </authorList>
    </citation>
    <scope>NUCLEOTIDE SEQUENCE [LARGE SCALE GENOMIC DNA]</scope>
    <source>
        <strain>Pestoides F</strain>
    </source>
</reference>
<keyword id="KW-0028">Amino-acid biosynthesis</keyword>
<keyword id="KW-0067">ATP-binding</keyword>
<keyword id="KW-0418">Kinase</keyword>
<keyword id="KW-0486">Methionine biosynthesis</keyword>
<keyword id="KW-0547">Nucleotide-binding</keyword>
<keyword id="KW-0808">Transferase</keyword>
<proteinExistence type="inferred from homology"/>
<evidence type="ECO:0000255" key="1">
    <source>
        <dbReference type="HAMAP-Rule" id="MF_01683"/>
    </source>
</evidence>
<sequence length="407" mass="45283">MSRYHTFTAADAVEYARQFGQVADPQALVTADEIGDGNLNLVFKIRDTAGISRVIVKQALPYVRCVGESWPLMLDRARIEAETLLTHSQFCPQHTVKVLHHDAELAVMVQEDLSDHHIWRHELIQGNYYPQAAEQLGEYLAQTLFHTSDFYQSAQAKKAAVSRYTNPELCQITEDLFFTDPYIEHERNNFDPVLLPEVLSLRQDKALKLAVASLKHRFLSQAEALLHGDIHSGSIFVADGRLKTIDAEFGFYGPIGFDIGTALGNLLLNYCGLPGLAGPRDAAAGREQRLNDVQTVWQTFAARFLALSQEKAQDPALATEGYAAQFLQHVWRDAIGYCGSELIRRTIGLAHVADLDSIDDQEMRRACQRHALSLGRALILVAPHVDDVGGVVARIRQSPSSLTPQRC</sequence>
<accession>A4TPM8</accession>
<name>MTNK_YERPP</name>
<feature type="chain" id="PRO_0000357350" description="Methylthioribose kinase">
    <location>
        <begin position="1"/>
        <end position="407"/>
    </location>
</feature>
<feature type="binding site" evidence="1">
    <location>
        <position position="40"/>
    </location>
    <ligand>
        <name>ATP</name>
        <dbReference type="ChEBI" id="CHEBI:30616"/>
    </ligand>
</feature>
<feature type="binding site" evidence="1">
    <location>
        <position position="57"/>
    </location>
    <ligand>
        <name>ATP</name>
        <dbReference type="ChEBI" id="CHEBI:30616"/>
    </ligand>
</feature>
<feature type="binding site" evidence="1">
    <location>
        <begin position="111"/>
        <end position="113"/>
    </location>
    <ligand>
        <name>ATP</name>
        <dbReference type="ChEBI" id="CHEBI:30616"/>
    </ligand>
</feature>
<feature type="binding site" evidence="1">
    <location>
        <position position="229"/>
    </location>
    <ligand>
        <name>substrate</name>
    </ligand>
</feature>
<feature type="binding site" evidence="1">
    <location>
        <begin position="246"/>
        <end position="248"/>
    </location>
    <ligand>
        <name>ATP</name>
        <dbReference type="ChEBI" id="CHEBI:30616"/>
    </ligand>
</feature>
<feature type="binding site" evidence="1">
    <location>
        <position position="344"/>
    </location>
    <ligand>
        <name>substrate</name>
    </ligand>
</feature>
<comment type="function">
    <text evidence="1">Catalyzes the phosphorylation of methylthioribose into methylthioribose-1-phosphate.</text>
</comment>
<comment type="catalytic activity">
    <reaction evidence="1">
        <text>5-(methylsulfanyl)-D-ribose + ATP = 5-(methylsulfanyl)-alpha-D-ribose 1-phosphate + ADP + H(+)</text>
        <dbReference type="Rhea" id="RHEA:22312"/>
        <dbReference type="ChEBI" id="CHEBI:15378"/>
        <dbReference type="ChEBI" id="CHEBI:30616"/>
        <dbReference type="ChEBI" id="CHEBI:58533"/>
        <dbReference type="ChEBI" id="CHEBI:78440"/>
        <dbReference type="ChEBI" id="CHEBI:456216"/>
        <dbReference type="EC" id="2.7.1.100"/>
    </reaction>
</comment>
<comment type="pathway">
    <text evidence="1">Amino-acid biosynthesis; L-methionine biosynthesis via salvage pathway; S-methyl-5-thio-alpha-D-ribose 1-phosphate from S-methyl-5'-thioadenosine (hydrolase route): step 2/2.</text>
</comment>
<comment type="subunit">
    <text evidence="1">Homodimer.</text>
</comment>
<comment type="similarity">
    <text evidence="1">Belongs to the methylthioribose kinase family.</text>
</comment>
<gene>
    <name evidence="1" type="primary">mtnK</name>
    <name type="ordered locus">YPDSF_2878</name>
</gene>
<organism>
    <name type="scientific">Yersinia pestis (strain Pestoides F)</name>
    <dbReference type="NCBI Taxonomy" id="386656"/>
    <lineage>
        <taxon>Bacteria</taxon>
        <taxon>Pseudomonadati</taxon>
        <taxon>Pseudomonadota</taxon>
        <taxon>Gammaproteobacteria</taxon>
        <taxon>Enterobacterales</taxon>
        <taxon>Yersiniaceae</taxon>
        <taxon>Yersinia</taxon>
    </lineage>
</organism>